<name>CDAC1_MOUSE</name>
<proteinExistence type="evidence at transcript level"/>
<evidence type="ECO:0000250" key="1">
    <source>
        <dbReference type="UniProtKB" id="Q9BWV3"/>
    </source>
</evidence>
<evidence type="ECO:0000250" key="2">
    <source>
        <dbReference type="UniProtKB" id="Q9GZX7"/>
    </source>
</evidence>
<evidence type="ECO:0000255" key="3">
    <source>
        <dbReference type="PROSITE-ProRule" id="PRU01083"/>
    </source>
</evidence>
<evidence type="ECO:0000256" key="4">
    <source>
        <dbReference type="SAM" id="MobiDB-lite"/>
    </source>
</evidence>
<evidence type="ECO:0000303" key="5">
    <source>
    </source>
</evidence>
<evidence type="ECO:0000303" key="6">
    <source>
    </source>
</evidence>
<evidence type="ECO:0000305" key="7"/>
<feature type="chain" id="PRO_0000300493" description="Cytidine and dCMP deaminase domain-containing protein 1">
    <location>
        <begin position="1"/>
        <end position="523"/>
    </location>
</feature>
<feature type="domain" description="CMP/dCMP-type deaminase 1" evidence="3">
    <location>
        <begin position="71"/>
        <end position="169"/>
    </location>
</feature>
<feature type="domain" description="CMP/dCMP-type deaminase 2" evidence="3">
    <location>
        <begin position="318"/>
        <end position="483"/>
    </location>
</feature>
<feature type="region of interest" description="Disordered" evidence="4">
    <location>
        <begin position="1"/>
        <end position="27"/>
    </location>
</feature>
<feature type="region of interest" description="Disordered" evidence="4">
    <location>
        <begin position="55"/>
        <end position="81"/>
    </location>
</feature>
<feature type="region of interest" description="Disordered" evidence="4">
    <location>
        <begin position="478"/>
        <end position="523"/>
    </location>
</feature>
<feature type="short sequence motif" description="Nuclear export signal" evidence="1">
    <location>
        <begin position="272"/>
        <end position="284"/>
    </location>
</feature>
<feature type="short sequence motif" description="Bipartite nuclear localization signal" evidence="1">
    <location>
        <begin position="489"/>
        <end position="511"/>
    </location>
</feature>
<feature type="compositionally biased region" description="Polar residues" evidence="4">
    <location>
        <begin position="1"/>
        <end position="11"/>
    </location>
</feature>
<feature type="compositionally biased region" description="Basic and acidic residues" evidence="4">
    <location>
        <begin position="486"/>
        <end position="516"/>
    </location>
</feature>
<feature type="active site" description="Proton donor" evidence="3">
    <location>
        <position position="401"/>
    </location>
</feature>
<feature type="binding site" evidence="3">
    <location>
        <position position="110"/>
    </location>
    <ligand>
        <name>Zn(2+)</name>
        <dbReference type="ChEBI" id="CHEBI:29105"/>
        <label>1</label>
    </ligand>
</feature>
<feature type="binding site" evidence="3">
    <location>
        <position position="135"/>
    </location>
    <ligand>
        <name>Zn(2+)</name>
        <dbReference type="ChEBI" id="CHEBI:29105"/>
        <label>1</label>
    </ligand>
</feature>
<feature type="binding site" evidence="3">
    <location>
        <position position="138"/>
    </location>
    <ligand>
        <name>Zn(2+)</name>
        <dbReference type="ChEBI" id="CHEBI:29105"/>
        <label>1</label>
    </ligand>
</feature>
<feature type="binding site" evidence="3">
    <location>
        <position position="399"/>
    </location>
    <ligand>
        <name>Zn(2+)</name>
        <dbReference type="ChEBI" id="CHEBI:29105"/>
        <label>2</label>
        <note>catalytic</note>
    </ligand>
</feature>
<feature type="binding site" evidence="3">
    <location>
        <position position="427"/>
    </location>
    <ligand>
        <name>Zn(2+)</name>
        <dbReference type="ChEBI" id="CHEBI:29105"/>
        <label>2</label>
        <note>catalytic</note>
    </ligand>
</feature>
<feature type="binding site" evidence="3">
    <location>
        <position position="430"/>
    </location>
    <ligand>
        <name>Zn(2+)</name>
        <dbReference type="ChEBI" id="CHEBI:29105"/>
        <label>2</label>
        <note>catalytic</note>
    </ligand>
</feature>
<feature type="splice variant" id="VSP_027817" description="In isoform 6." evidence="6">
    <location>
        <begin position="1"/>
        <end position="96"/>
    </location>
</feature>
<feature type="splice variant" id="VSP_027818" description="In isoform 6." evidence="6">
    <location>
        <begin position="480"/>
        <end position="523"/>
    </location>
</feature>
<feature type="splice variant" id="VSP_027819" description="In isoform 4." evidence="5 6">
    <original>NGVLRRRSA</original>
    <variation>KHLSIKRSH</variation>
    <location>
        <begin position="492"/>
        <end position="500"/>
    </location>
</feature>
<feature type="splice variant" id="VSP_027820" description="In isoform 2." evidence="5">
    <original>NGVLRRRS</original>
    <variation>RSATTACF</variation>
    <location>
        <begin position="492"/>
        <end position="499"/>
    </location>
</feature>
<feature type="splice variant" id="VSP_027821" description="In isoform 3." evidence="6">
    <original>NGVLRR</original>
    <variation>SFFFMP</variation>
    <location>
        <begin position="492"/>
        <end position="497"/>
    </location>
</feature>
<feature type="splice variant" id="VSP_027822" description="In isoform 3." evidence="6">
    <location>
        <begin position="498"/>
        <end position="523"/>
    </location>
</feature>
<feature type="splice variant" id="VSP_027823" description="In isoform 2." evidence="5">
    <location>
        <begin position="500"/>
        <end position="523"/>
    </location>
</feature>
<feature type="splice variant" id="VSP_027824" description="In isoform 4." evidence="5 6">
    <location>
        <begin position="501"/>
        <end position="523"/>
    </location>
</feature>
<feature type="sequence conflict" description="In Ref. 1; BAC30171." evidence="7" ref="1">
    <original>H</original>
    <variation>R</variation>
    <location>
        <position position="252"/>
    </location>
</feature>
<feature type="sequence conflict" description="In Ref. 2; AAH04588." evidence="7" ref="2">
    <original>IHN</original>
    <variation>VHS</variation>
    <location>
        <begin position="310"/>
        <end position="312"/>
    </location>
</feature>
<feature type="sequence conflict" description="In Ref. 1; BAC30171 and 2; AAH04588." evidence="7" ref="1 2">
    <original>R</original>
    <variation>H</variation>
    <location>
        <position position="417"/>
    </location>
</feature>
<sequence>MKETDQMQSLEGSGAERSVGTQTGSMTGQIPRLSKVNLFTLLSLWMELFPGVEAQGQKSQKTEEESRGPLGDNEELTRVSTEKKQVKKTGLVVVKNMKIIGLHCSSEDLHTGQIALIKHGSRLKNCDLYFSRKPCSACLKMIVNAGVNRISYWPSDPEISLLTEASSSEDAKLDAKAAERLKSNSRAHVCVLLQPLVCYMVQFVEETSYKCDFIQKTAKALPGADTDFYSECKQERIKEYEMLFLVSNEERHKQILMTIGLESLCEDPYFSNLRQNMKDLILLLATVASSVPNLKHFGFYCSSPEQINEIHNQSLPQEVARHCMVQARLLAYRTEDHKTGVGAVIWAEAKSRSCDGTGAMYFIGCGYNAFPVGSEYADFPHMDDKHKDREIRKFRYIIHAEQNALTFRCQDIKPEERSMIFVTKCPCDECVPLIKGAGIKQIYAGDVDVGKKKADISYMKFGELEGVRKFTWQLNPSEAYSLDPNEPERRENGVLRRRSAKDEQRSSKRPRLETRSAGRATLQ</sequence>
<organism>
    <name type="scientific">Mus musculus</name>
    <name type="common">Mouse</name>
    <dbReference type="NCBI Taxonomy" id="10090"/>
    <lineage>
        <taxon>Eukaryota</taxon>
        <taxon>Metazoa</taxon>
        <taxon>Chordata</taxon>
        <taxon>Craniata</taxon>
        <taxon>Vertebrata</taxon>
        <taxon>Euteleostomi</taxon>
        <taxon>Mammalia</taxon>
        <taxon>Eutheria</taxon>
        <taxon>Euarchontoglires</taxon>
        <taxon>Glires</taxon>
        <taxon>Rodentia</taxon>
        <taxon>Myomorpha</taxon>
        <taxon>Muroidea</taxon>
        <taxon>Muridae</taxon>
        <taxon>Murinae</taxon>
        <taxon>Mus</taxon>
        <taxon>Mus</taxon>
    </lineage>
</organism>
<protein>
    <recommendedName>
        <fullName>Cytidine and dCMP deaminase domain-containing protein 1</fullName>
        <ecNumber evidence="1">3.5.4.5</ecNumber>
    </recommendedName>
    <alternativeName>
        <fullName evidence="7">Cytidine deaminase</fullName>
    </alternativeName>
</protein>
<accession>Q8BMD5</accession>
<accession>Q8BYL2</accession>
<accession>Q8BYN1</accession>
<accession>Q8C014</accession>
<accession>Q922P4</accession>
<accession>Q99KL2</accession>
<accession>Q9D7F3</accession>
<dbReference type="EC" id="3.5.4.5" evidence="1"/>
<dbReference type="EMBL" id="AK009280">
    <property type="protein sequence ID" value="BAB26191.1"/>
    <property type="status" value="ALT_FRAME"/>
    <property type="molecule type" value="mRNA"/>
</dbReference>
<dbReference type="EMBL" id="AK032600">
    <property type="protein sequence ID" value="BAC27943.1"/>
    <property type="molecule type" value="mRNA"/>
</dbReference>
<dbReference type="EMBL" id="AK032813">
    <property type="protein sequence ID" value="BAC28036.1"/>
    <property type="molecule type" value="mRNA"/>
</dbReference>
<dbReference type="EMBL" id="AK038926">
    <property type="protein sequence ID" value="BAC30171.1"/>
    <property type="molecule type" value="mRNA"/>
</dbReference>
<dbReference type="EMBL" id="AK039148">
    <property type="protein sequence ID" value="BAC30255.1"/>
    <property type="molecule type" value="mRNA"/>
</dbReference>
<dbReference type="EMBL" id="BC004588">
    <property type="protein sequence ID" value="AAH04588.1"/>
    <property type="molecule type" value="mRNA"/>
</dbReference>
<dbReference type="EMBL" id="BC006901">
    <property type="protein sequence ID" value="AAH06901.1"/>
    <property type="molecule type" value="mRNA"/>
</dbReference>
<dbReference type="CCDS" id="CCDS36940.1">
    <molecule id="Q8BMD5-1"/>
</dbReference>
<dbReference type="CCDS" id="CCDS49513.1">
    <molecule id="Q8BMD5-2"/>
</dbReference>
<dbReference type="CCDS" id="CCDS49515.1">
    <molecule id="Q8BMD5-4"/>
</dbReference>
<dbReference type="CCDS" id="CCDS88678.1">
    <molecule id="Q8BMD5-3"/>
</dbReference>
<dbReference type="RefSeq" id="NP_001162007.1">
    <property type="nucleotide sequence ID" value="NM_001168535.1"/>
</dbReference>
<dbReference type="RefSeq" id="NP_001162008.1">
    <molecule id="Q8BMD5-4"/>
    <property type="nucleotide sequence ID" value="NM_001168536.1"/>
</dbReference>
<dbReference type="RefSeq" id="NP_001162009.1">
    <molecule id="Q8BMD5-2"/>
    <property type="nucleotide sequence ID" value="NM_001168537.1"/>
</dbReference>
<dbReference type="RefSeq" id="NP_001162010.1">
    <molecule id="Q8BMD5-3"/>
    <property type="nucleotide sequence ID" value="NM_001168538.1"/>
</dbReference>
<dbReference type="RefSeq" id="NP_082262.1">
    <molecule id="Q8BMD5-1"/>
    <property type="nucleotide sequence ID" value="NM_027986.3"/>
</dbReference>
<dbReference type="RefSeq" id="XP_017171695.1">
    <property type="nucleotide sequence ID" value="XM_017316206.1"/>
</dbReference>
<dbReference type="SMR" id="Q8BMD5"/>
<dbReference type="FunCoup" id="Q8BMD5">
    <property type="interactions" value="2758"/>
</dbReference>
<dbReference type="STRING" id="10090.ENSMUSP00000153357"/>
<dbReference type="GlyGen" id="Q8BMD5">
    <property type="glycosylation" value="1 site, 1 N-linked glycan (1 site)"/>
</dbReference>
<dbReference type="iPTMnet" id="Q8BMD5"/>
<dbReference type="PhosphoSitePlus" id="Q8BMD5"/>
<dbReference type="PaxDb" id="10090-ENSMUSP00000128022"/>
<dbReference type="ProteomicsDB" id="283755">
    <molecule id="Q8BMD5-1"/>
</dbReference>
<dbReference type="ProteomicsDB" id="283756">
    <molecule id="Q8BMD5-2"/>
</dbReference>
<dbReference type="ProteomicsDB" id="283757">
    <molecule id="Q8BMD5-3"/>
</dbReference>
<dbReference type="ProteomicsDB" id="283758">
    <molecule id="Q8BMD5-4"/>
</dbReference>
<dbReference type="ProteomicsDB" id="283759">
    <molecule id="Q8BMD5-6"/>
</dbReference>
<dbReference type="Antibodypedia" id="23898">
    <property type="antibodies" value="180 antibodies from 20 providers"/>
</dbReference>
<dbReference type="DNASU" id="71891"/>
<dbReference type="Ensembl" id="ENSMUST00000022555.11">
    <molecule id="Q8BMD5-2"/>
    <property type="protein sequence ID" value="ENSMUSP00000022555.4"/>
    <property type="gene ID" value="ENSMUSG00000021982.15"/>
</dbReference>
<dbReference type="Ensembl" id="ENSMUST00000056997.15">
    <molecule id="Q8BMD5-1"/>
    <property type="protein sequence ID" value="ENSMUSP00000052233.8"/>
    <property type="gene ID" value="ENSMUSG00000021982.15"/>
</dbReference>
<dbReference type="Ensembl" id="ENSMUST00000167100.9">
    <molecule id="Q8BMD5-3"/>
    <property type="protein sequence ID" value="ENSMUSP00000128022.3"/>
    <property type="gene ID" value="ENSMUSG00000021982.15"/>
</dbReference>
<dbReference type="Ensembl" id="ENSMUST00000171683.3">
    <molecule id="Q8BMD5-4"/>
    <property type="protein sequence ID" value="ENSMUSP00000128064.2"/>
    <property type="gene ID" value="ENSMUSG00000021982.15"/>
</dbReference>
<dbReference type="GeneID" id="71891"/>
<dbReference type="KEGG" id="mmu:71891"/>
<dbReference type="UCSC" id="uc007ueo.2">
    <molecule id="Q8BMD5-1"/>
    <property type="organism name" value="mouse"/>
</dbReference>
<dbReference type="UCSC" id="uc007uep.2">
    <molecule id="Q8BMD5-4"/>
    <property type="organism name" value="mouse"/>
</dbReference>
<dbReference type="UCSC" id="uc011zmw.1">
    <molecule id="Q8BMD5-3"/>
    <property type="organism name" value="mouse"/>
</dbReference>
<dbReference type="UCSC" id="uc011zmx.1">
    <molecule id="Q8BMD5-2"/>
    <property type="organism name" value="mouse"/>
</dbReference>
<dbReference type="AGR" id="MGI:1919141"/>
<dbReference type="CTD" id="81602"/>
<dbReference type="MGI" id="MGI:1919141">
    <property type="gene designation" value="Cdadc1"/>
</dbReference>
<dbReference type="VEuPathDB" id="HostDB:ENSMUSG00000021982"/>
<dbReference type="eggNOG" id="KOG3127">
    <property type="taxonomic scope" value="Eukaryota"/>
</dbReference>
<dbReference type="GeneTree" id="ENSGT00940000153676"/>
<dbReference type="HOGENOM" id="CLU_038832_1_0_1"/>
<dbReference type="InParanoid" id="Q8BMD5"/>
<dbReference type="OrthoDB" id="6710946at2759"/>
<dbReference type="PhylomeDB" id="Q8BMD5"/>
<dbReference type="BioGRID-ORCS" id="71891">
    <property type="hits" value="2 hits in 77 CRISPR screens"/>
</dbReference>
<dbReference type="ChiTaRS" id="Cdadc1">
    <property type="organism name" value="mouse"/>
</dbReference>
<dbReference type="PRO" id="PR:Q8BMD5"/>
<dbReference type="Proteomes" id="UP000000589">
    <property type="component" value="Chromosome 14"/>
</dbReference>
<dbReference type="RNAct" id="Q8BMD5">
    <property type="molecule type" value="protein"/>
</dbReference>
<dbReference type="Bgee" id="ENSMUSG00000021982">
    <property type="expression patterns" value="Expressed in supraoptic nucleus and 251 other cell types or tissues"/>
</dbReference>
<dbReference type="ExpressionAtlas" id="Q8BMD5">
    <property type="expression patterns" value="baseline and differential"/>
</dbReference>
<dbReference type="GO" id="GO:0005737">
    <property type="term" value="C:cytoplasm"/>
    <property type="evidence" value="ECO:0007669"/>
    <property type="project" value="UniProtKB-SubCell"/>
</dbReference>
<dbReference type="GO" id="GO:0005634">
    <property type="term" value="C:nucleus"/>
    <property type="evidence" value="ECO:0007669"/>
    <property type="project" value="UniProtKB-SubCell"/>
</dbReference>
<dbReference type="GO" id="GO:0004126">
    <property type="term" value="F:cytidine deaminase activity"/>
    <property type="evidence" value="ECO:0007669"/>
    <property type="project" value="UniProtKB-EC"/>
</dbReference>
<dbReference type="GO" id="GO:0008270">
    <property type="term" value="F:zinc ion binding"/>
    <property type="evidence" value="ECO:0007669"/>
    <property type="project" value="InterPro"/>
</dbReference>
<dbReference type="CDD" id="cd01286">
    <property type="entry name" value="deoxycytidylate_deaminase"/>
    <property type="match status" value="1"/>
</dbReference>
<dbReference type="FunFam" id="3.40.140.10:FF:000028">
    <property type="entry name" value="Cytidine and dCMP deaminase domain containing 1"/>
    <property type="match status" value="1"/>
</dbReference>
<dbReference type="FunFam" id="3.40.140.10:FF:000030">
    <property type="entry name" value="Cytidine and dCMP deaminase domain-containing protein 1"/>
    <property type="match status" value="1"/>
</dbReference>
<dbReference type="Gene3D" id="3.40.140.10">
    <property type="entry name" value="Cytidine Deaminase, domain 2"/>
    <property type="match status" value="2"/>
</dbReference>
<dbReference type="InterPro" id="IPR016192">
    <property type="entry name" value="APOBEC/CMP_deaminase_Zn-bd"/>
</dbReference>
<dbReference type="InterPro" id="IPR002125">
    <property type="entry name" value="CMP_dCMP_dom"/>
</dbReference>
<dbReference type="InterPro" id="IPR016193">
    <property type="entry name" value="Cytidine_deaminase-like"/>
</dbReference>
<dbReference type="InterPro" id="IPR015517">
    <property type="entry name" value="dCMP_deaminase-rel"/>
</dbReference>
<dbReference type="InterPro" id="IPR035105">
    <property type="entry name" value="Deoxycytidylate_deaminase_dom"/>
</dbReference>
<dbReference type="PANTHER" id="PTHR11086:SF14">
    <property type="entry name" value="CYTIDINE AND DCMP DEAMINASE DOMAIN-CONTAINING PROTEIN 1"/>
    <property type="match status" value="1"/>
</dbReference>
<dbReference type="PANTHER" id="PTHR11086">
    <property type="entry name" value="DEOXYCYTIDYLATE DEAMINASE-RELATED"/>
    <property type="match status" value="1"/>
</dbReference>
<dbReference type="Pfam" id="PF00383">
    <property type="entry name" value="dCMP_cyt_deam_1"/>
    <property type="match status" value="2"/>
</dbReference>
<dbReference type="SUPFAM" id="SSF53927">
    <property type="entry name" value="Cytidine deaminase-like"/>
    <property type="match status" value="2"/>
</dbReference>
<dbReference type="PROSITE" id="PS00903">
    <property type="entry name" value="CYT_DCMP_DEAMINASES_1"/>
    <property type="match status" value="1"/>
</dbReference>
<dbReference type="PROSITE" id="PS51747">
    <property type="entry name" value="CYT_DCMP_DEAMINASES_2"/>
    <property type="match status" value="2"/>
</dbReference>
<reference key="1">
    <citation type="journal article" date="2005" name="Science">
        <title>The transcriptional landscape of the mammalian genome.</title>
        <authorList>
            <person name="Carninci P."/>
            <person name="Kasukawa T."/>
            <person name="Katayama S."/>
            <person name="Gough J."/>
            <person name="Frith M.C."/>
            <person name="Maeda N."/>
            <person name="Oyama R."/>
            <person name="Ravasi T."/>
            <person name="Lenhard B."/>
            <person name="Wells C."/>
            <person name="Kodzius R."/>
            <person name="Shimokawa K."/>
            <person name="Bajic V.B."/>
            <person name="Brenner S.E."/>
            <person name="Batalov S."/>
            <person name="Forrest A.R."/>
            <person name="Zavolan M."/>
            <person name="Davis M.J."/>
            <person name="Wilming L.G."/>
            <person name="Aidinis V."/>
            <person name="Allen J.E."/>
            <person name="Ambesi-Impiombato A."/>
            <person name="Apweiler R."/>
            <person name="Aturaliya R.N."/>
            <person name="Bailey T.L."/>
            <person name="Bansal M."/>
            <person name="Baxter L."/>
            <person name="Beisel K.W."/>
            <person name="Bersano T."/>
            <person name="Bono H."/>
            <person name="Chalk A.M."/>
            <person name="Chiu K.P."/>
            <person name="Choudhary V."/>
            <person name="Christoffels A."/>
            <person name="Clutterbuck D.R."/>
            <person name="Crowe M.L."/>
            <person name="Dalla E."/>
            <person name="Dalrymple B.P."/>
            <person name="de Bono B."/>
            <person name="Della Gatta G."/>
            <person name="di Bernardo D."/>
            <person name="Down T."/>
            <person name="Engstrom P."/>
            <person name="Fagiolini M."/>
            <person name="Faulkner G."/>
            <person name="Fletcher C.F."/>
            <person name="Fukushima T."/>
            <person name="Furuno M."/>
            <person name="Futaki S."/>
            <person name="Gariboldi M."/>
            <person name="Georgii-Hemming P."/>
            <person name="Gingeras T.R."/>
            <person name="Gojobori T."/>
            <person name="Green R.E."/>
            <person name="Gustincich S."/>
            <person name="Harbers M."/>
            <person name="Hayashi Y."/>
            <person name="Hensch T.K."/>
            <person name="Hirokawa N."/>
            <person name="Hill D."/>
            <person name="Huminiecki L."/>
            <person name="Iacono M."/>
            <person name="Ikeo K."/>
            <person name="Iwama A."/>
            <person name="Ishikawa T."/>
            <person name="Jakt M."/>
            <person name="Kanapin A."/>
            <person name="Katoh M."/>
            <person name="Kawasawa Y."/>
            <person name="Kelso J."/>
            <person name="Kitamura H."/>
            <person name="Kitano H."/>
            <person name="Kollias G."/>
            <person name="Krishnan S.P."/>
            <person name="Kruger A."/>
            <person name="Kummerfeld S.K."/>
            <person name="Kurochkin I.V."/>
            <person name="Lareau L.F."/>
            <person name="Lazarevic D."/>
            <person name="Lipovich L."/>
            <person name="Liu J."/>
            <person name="Liuni S."/>
            <person name="McWilliam S."/>
            <person name="Madan Babu M."/>
            <person name="Madera M."/>
            <person name="Marchionni L."/>
            <person name="Matsuda H."/>
            <person name="Matsuzawa S."/>
            <person name="Miki H."/>
            <person name="Mignone F."/>
            <person name="Miyake S."/>
            <person name="Morris K."/>
            <person name="Mottagui-Tabar S."/>
            <person name="Mulder N."/>
            <person name="Nakano N."/>
            <person name="Nakauchi H."/>
            <person name="Ng P."/>
            <person name="Nilsson R."/>
            <person name="Nishiguchi S."/>
            <person name="Nishikawa S."/>
            <person name="Nori F."/>
            <person name="Ohara O."/>
            <person name="Okazaki Y."/>
            <person name="Orlando V."/>
            <person name="Pang K.C."/>
            <person name="Pavan W.J."/>
            <person name="Pavesi G."/>
            <person name="Pesole G."/>
            <person name="Petrovsky N."/>
            <person name="Piazza S."/>
            <person name="Reed J."/>
            <person name="Reid J.F."/>
            <person name="Ring B.Z."/>
            <person name="Ringwald M."/>
            <person name="Rost B."/>
            <person name="Ruan Y."/>
            <person name="Salzberg S.L."/>
            <person name="Sandelin A."/>
            <person name="Schneider C."/>
            <person name="Schoenbach C."/>
            <person name="Sekiguchi K."/>
            <person name="Semple C.A."/>
            <person name="Seno S."/>
            <person name="Sessa L."/>
            <person name="Sheng Y."/>
            <person name="Shibata Y."/>
            <person name="Shimada H."/>
            <person name="Shimada K."/>
            <person name="Silva D."/>
            <person name="Sinclair B."/>
            <person name="Sperling S."/>
            <person name="Stupka E."/>
            <person name="Sugiura K."/>
            <person name="Sultana R."/>
            <person name="Takenaka Y."/>
            <person name="Taki K."/>
            <person name="Tammoja K."/>
            <person name="Tan S.L."/>
            <person name="Tang S."/>
            <person name="Taylor M.S."/>
            <person name="Tegner J."/>
            <person name="Teichmann S.A."/>
            <person name="Ueda H.R."/>
            <person name="van Nimwegen E."/>
            <person name="Verardo R."/>
            <person name="Wei C.L."/>
            <person name="Yagi K."/>
            <person name="Yamanishi H."/>
            <person name="Zabarovsky E."/>
            <person name="Zhu S."/>
            <person name="Zimmer A."/>
            <person name="Hide W."/>
            <person name="Bult C."/>
            <person name="Grimmond S.M."/>
            <person name="Teasdale R.D."/>
            <person name="Liu E.T."/>
            <person name="Brusic V."/>
            <person name="Quackenbush J."/>
            <person name="Wahlestedt C."/>
            <person name="Mattick J.S."/>
            <person name="Hume D.A."/>
            <person name="Kai C."/>
            <person name="Sasaki D."/>
            <person name="Tomaru Y."/>
            <person name="Fukuda S."/>
            <person name="Kanamori-Katayama M."/>
            <person name="Suzuki M."/>
            <person name="Aoki J."/>
            <person name="Arakawa T."/>
            <person name="Iida J."/>
            <person name="Imamura K."/>
            <person name="Itoh M."/>
            <person name="Kato T."/>
            <person name="Kawaji H."/>
            <person name="Kawagashira N."/>
            <person name="Kawashima T."/>
            <person name="Kojima M."/>
            <person name="Kondo S."/>
            <person name="Konno H."/>
            <person name="Nakano K."/>
            <person name="Ninomiya N."/>
            <person name="Nishio T."/>
            <person name="Okada M."/>
            <person name="Plessy C."/>
            <person name="Shibata K."/>
            <person name="Shiraki T."/>
            <person name="Suzuki S."/>
            <person name="Tagami M."/>
            <person name="Waki K."/>
            <person name="Watahiki A."/>
            <person name="Okamura-Oho Y."/>
            <person name="Suzuki H."/>
            <person name="Kawai J."/>
            <person name="Hayashizaki Y."/>
        </authorList>
    </citation>
    <scope>NUCLEOTIDE SEQUENCE [LARGE SCALE MRNA] (ISOFORMS 1; 3; 4 AND 6)</scope>
    <source>
        <strain>C57BL/6J</strain>
        <tissue>Hypothalamus</tissue>
        <tissue>Olfactory bulb</tissue>
        <tissue>Tongue</tissue>
        <tissue>Wolffian duct</tissue>
    </source>
</reference>
<reference key="2">
    <citation type="journal article" date="2004" name="Genome Res.">
        <title>The status, quality, and expansion of the NIH full-length cDNA project: the Mammalian Gene Collection (MGC).</title>
        <authorList>
            <consortium name="The MGC Project Team"/>
        </authorList>
    </citation>
    <scope>NUCLEOTIDE SEQUENCE [LARGE SCALE MRNA] (ISOFORM 2)</scope>
    <scope>NUCLEOTIDE SEQUENCE [LARGE SCALE MRNA] OF 289-523 (ISOFORM 4)</scope>
    <source>
        <strain>Czech II</strain>
        <strain>FVB/N</strain>
        <tissue>Mammary tumor</tissue>
    </source>
</reference>
<gene>
    <name type="primary">Cdadc1</name>
</gene>
<comment type="function">
    <text evidence="1">Catalyzes the deamination of cytidine and deoxycytidine into uridine and deoxyuridine, respectively. May play an important role in testicular development and spermatogenesis.</text>
</comment>
<comment type="catalytic activity">
    <reaction evidence="1">
        <text>2'-deoxycytidine + H2O + H(+) = 2'-deoxyuridine + NH4(+)</text>
        <dbReference type="Rhea" id="RHEA:13433"/>
        <dbReference type="ChEBI" id="CHEBI:15377"/>
        <dbReference type="ChEBI" id="CHEBI:15378"/>
        <dbReference type="ChEBI" id="CHEBI:15698"/>
        <dbReference type="ChEBI" id="CHEBI:16450"/>
        <dbReference type="ChEBI" id="CHEBI:28938"/>
        <dbReference type="EC" id="3.5.4.5"/>
    </reaction>
</comment>
<comment type="catalytic activity">
    <reaction evidence="1">
        <text>cytidine + H2O + H(+) = uridine + NH4(+)</text>
        <dbReference type="Rhea" id="RHEA:16069"/>
        <dbReference type="ChEBI" id="CHEBI:15377"/>
        <dbReference type="ChEBI" id="CHEBI:15378"/>
        <dbReference type="ChEBI" id="CHEBI:16704"/>
        <dbReference type="ChEBI" id="CHEBI:17562"/>
        <dbReference type="ChEBI" id="CHEBI:28938"/>
        <dbReference type="EC" id="3.5.4.5"/>
    </reaction>
</comment>
<comment type="cofactor">
    <cofactor evidence="2">
        <name>Zn(2+)</name>
        <dbReference type="ChEBI" id="CHEBI:29105"/>
    </cofactor>
</comment>
<comment type="subcellular location">
    <subcellularLocation>
        <location evidence="1">Cytoplasm</location>
    </subcellularLocation>
    <subcellularLocation>
        <location evidence="1">Nucleus</location>
    </subcellularLocation>
</comment>
<comment type="alternative products">
    <event type="alternative splicing"/>
    <isoform>
        <id>Q8BMD5-1</id>
        <name>1</name>
        <sequence type="displayed"/>
    </isoform>
    <isoform>
        <id>Q8BMD5-2</id>
        <name>2</name>
        <sequence type="described" ref="VSP_027820 VSP_027823"/>
    </isoform>
    <isoform>
        <id>Q8BMD5-3</id>
        <name>3</name>
        <sequence type="described" ref="VSP_027821 VSP_027822"/>
    </isoform>
    <isoform>
        <id>Q8BMD5-4</id>
        <name>4</name>
        <sequence type="described" ref="VSP_027819 VSP_027824"/>
    </isoform>
    <isoform>
        <id>Q8BMD5-6</id>
        <name>6</name>
        <sequence type="described" ref="VSP_027817 VSP_027818"/>
    </isoform>
</comment>
<comment type="similarity">
    <text evidence="7">Belongs to the cytidine and deoxycytidylate deaminase family.</text>
</comment>
<comment type="sequence caution" evidence="7">
    <conflict type="frameshift">
        <sequence resource="EMBL-CDS" id="BAB26191"/>
    </conflict>
</comment>
<keyword id="KW-0025">Alternative splicing</keyword>
<keyword id="KW-0963">Cytoplasm</keyword>
<keyword id="KW-0378">Hydrolase</keyword>
<keyword id="KW-0479">Metal-binding</keyword>
<keyword id="KW-0539">Nucleus</keyword>
<keyword id="KW-1185">Reference proteome</keyword>
<keyword id="KW-0677">Repeat</keyword>
<keyword id="KW-0862">Zinc</keyword>